<proteinExistence type="inferred from homology"/>
<sequence>MSKKIVLLPGDGIGPEIVAEAKKVLEAVDAKFKLGLKFEEDLIGGCAIDVHGVPLAQSTLDRCKAADAVLMGSVGGPKWDALDSNIRPEKGLLKIRYEMGLYANLRPAILYPQLADASSLKPEIVSGLDILIVRELTGGIYFGEPRGIRLLDNGERQGYNTYVYAEHEIERIGRTAFEMAMKRDKKVCSVDKANVLEATVLWREVIQSISKDYPEVELSHMYVDNAAMQLVRAPKQFDVVVTGNMFGDILSDTAAMLTGSIGMLPSASLNQDSKGLYEPVHGSAPDIAGQGVANPLATILSAAMMLRYSLNEAAAADAIEAAVGAVLDDGLRSADIFSEGMKKVSTQEMGDAVAAKI</sequence>
<organism>
    <name type="scientific">Saccharophagus degradans (strain 2-40 / ATCC 43961 / DSM 17024)</name>
    <dbReference type="NCBI Taxonomy" id="203122"/>
    <lineage>
        <taxon>Bacteria</taxon>
        <taxon>Pseudomonadati</taxon>
        <taxon>Pseudomonadota</taxon>
        <taxon>Gammaproteobacteria</taxon>
        <taxon>Cellvibrionales</taxon>
        <taxon>Cellvibrionaceae</taxon>
        <taxon>Saccharophagus</taxon>
    </lineage>
</organism>
<comment type="function">
    <text evidence="1">Catalyzes the oxidation of 3-carboxy-2-hydroxy-4-methylpentanoate (3-isopropylmalate) to 3-carboxy-4-methyl-2-oxopentanoate. The product decarboxylates to 4-methyl-2 oxopentanoate.</text>
</comment>
<comment type="catalytic activity">
    <reaction evidence="1">
        <text>(2R,3S)-3-isopropylmalate + NAD(+) = 4-methyl-2-oxopentanoate + CO2 + NADH</text>
        <dbReference type="Rhea" id="RHEA:32271"/>
        <dbReference type="ChEBI" id="CHEBI:16526"/>
        <dbReference type="ChEBI" id="CHEBI:17865"/>
        <dbReference type="ChEBI" id="CHEBI:35121"/>
        <dbReference type="ChEBI" id="CHEBI:57540"/>
        <dbReference type="ChEBI" id="CHEBI:57945"/>
        <dbReference type="EC" id="1.1.1.85"/>
    </reaction>
</comment>
<comment type="cofactor">
    <cofactor evidence="1">
        <name>Mg(2+)</name>
        <dbReference type="ChEBI" id="CHEBI:18420"/>
    </cofactor>
    <cofactor evidence="1">
        <name>Mn(2+)</name>
        <dbReference type="ChEBI" id="CHEBI:29035"/>
    </cofactor>
    <text evidence="1">Binds 1 Mg(2+) or Mn(2+) ion per subunit.</text>
</comment>
<comment type="pathway">
    <text evidence="1">Amino-acid biosynthesis; L-leucine biosynthesis; L-leucine from 3-methyl-2-oxobutanoate: step 3/4.</text>
</comment>
<comment type="subunit">
    <text evidence="1">Homodimer.</text>
</comment>
<comment type="subcellular location">
    <subcellularLocation>
        <location evidence="1">Cytoplasm</location>
    </subcellularLocation>
</comment>
<comment type="similarity">
    <text evidence="1">Belongs to the isocitrate and isopropylmalate dehydrogenases family. LeuB type 1 subfamily.</text>
</comment>
<gene>
    <name evidence="1" type="primary">leuB</name>
    <name type="ordered locus">Sde_2084</name>
</gene>
<reference key="1">
    <citation type="journal article" date="2008" name="PLoS Genet.">
        <title>Complete genome sequence of the complex carbohydrate-degrading marine bacterium, Saccharophagus degradans strain 2-40 T.</title>
        <authorList>
            <person name="Weiner R.M."/>
            <person name="Taylor L.E. II"/>
            <person name="Henrissat B."/>
            <person name="Hauser L."/>
            <person name="Land M."/>
            <person name="Coutinho P.M."/>
            <person name="Rancurel C."/>
            <person name="Saunders E.H."/>
            <person name="Longmire A.G."/>
            <person name="Zhang H."/>
            <person name="Bayer E.A."/>
            <person name="Gilbert H.J."/>
            <person name="Larimer F."/>
            <person name="Zhulin I.B."/>
            <person name="Ekborg N.A."/>
            <person name="Lamed R."/>
            <person name="Richardson P.M."/>
            <person name="Borovok I."/>
            <person name="Hutcheson S."/>
        </authorList>
    </citation>
    <scope>NUCLEOTIDE SEQUENCE [LARGE SCALE GENOMIC DNA]</scope>
    <source>
        <strain>2-40 / ATCC 43961 / DSM 17024</strain>
    </source>
</reference>
<protein>
    <recommendedName>
        <fullName evidence="1">3-isopropylmalate dehydrogenase</fullName>
        <ecNumber evidence="1">1.1.1.85</ecNumber>
    </recommendedName>
    <alternativeName>
        <fullName evidence="1">3-IPM-DH</fullName>
    </alternativeName>
    <alternativeName>
        <fullName evidence="1">Beta-IPM dehydrogenase</fullName>
        <shortName evidence="1">IMDH</shortName>
    </alternativeName>
</protein>
<evidence type="ECO:0000255" key="1">
    <source>
        <dbReference type="HAMAP-Rule" id="MF_01033"/>
    </source>
</evidence>
<accession>Q21IY5</accession>
<name>LEU3_SACD2</name>
<feature type="chain" id="PRO_0000250136" description="3-isopropylmalate dehydrogenase">
    <location>
        <begin position="1"/>
        <end position="357"/>
    </location>
</feature>
<feature type="binding site" evidence="1">
    <location>
        <begin position="76"/>
        <end position="89"/>
    </location>
    <ligand>
        <name>NAD(+)</name>
        <dbReference type="ChEBI" id="CHEBI:57540"/>
    </ligand>
</feature>
<feature type="binding site" evidence="1">
    <location>
        <position position="96"/>
    </location>
    <ligand>
        <name>substrate</name>
    </ligand>
</feature>
<feature type="binding site" evidence="1">
    <location>
        <position position="106"/>
    </location>
    <ligand>
        <name>substrate</name>
    </ligand>
</feature>
<feature type="binding site" evidence="1">
    <location>
        <position position="134"/>
    </location>
    <ligand>
        <name>substrate</name>
    </ligand>
</feature>
<feature type="binding site" evidence="1">
    <location>
        <position position="224"/>
    </location>
    <ligand>
        <name>Mg(2+)</name>
        <dbReference type="ChEBI" id="CHEBI:18420"/>
    </ligand>
</feature>
<feature type="binding site" evidence="1">
    <location>
        <position position="224"/>
    </location>
    <ligand>
        <name>substrate</name>
    </ligand>
</feature>
<feature type="binding site" evidence="1">
    <location>
        <position position="248"/>
    </location>
    <ligand>
        <name>Mg(2+)</name>
        <dbReference type="ChEBI" id="CHEBI:18420"/>
    </ligand>
</feature>
<feature type="binding site" evidence="1">
    <location>
        <position position="252"/>
    </location>
    <ligand>
        <name>Mg(2+)</name>
        <dbReference type="ChEBI" id="CHEBI:18420"/>
    </ligand>
</feature>
<feature type="binding site" evidence="1">
    <location>
        <begin position="282"/>
        <end position="294"/>
    </location>
    <ligand>
        <name>NAD(+)</name>
        <dbReference type="ChEBI" id="CHEBI:57540"/>
    </ligand>
</feature>
<feature type="site" description="Important for catalysis" evidence="1">
    <location>
        <position position="141"/>
    </location>
</feature>
<feature type="site" description="Important for catalysis" evidence="1">
    <location>
        <position position="192"/>
    </location>
</feature>
<dbReference type="EC" id="1.1.1.85" evidence="1"/>
<dbReference type="EMBL" id="CP000282">
    <property type="protein sequence ID" value="ABD81344.1"/>
    <property type="molecule type" value="Genomic_DNA"/>
</dbReference>
<dbReference type="RefSeq" id="WP_011468562.1">
    <property type="nucleotide sequence ID" value="NC_007912.1"/>
</dbReference>
<dbReference type="SMR" id="Q21IY5"/>
<dbReference type="STRING" id="203122.Sde_2084"/>
<dbReference type="GeneID" id="98613756"/>
<dbReference type="KEGG" id="sde:Sde_2084"/>
<dbReference type="eggNOG" id="COG0473">
    <property type="taxonomic scope" value="Bacteria"/>
</dbReference>
<dbReference type="HOGENOM" id="CLU_031953_0_3_6"/>
<dbReference type="OrthoDB" id="9767905at2"/>
<dbReference type="UniPathway" id="UPA00048">
    <property type="reaction ID" value="UER00072"/>
</dbReference>
<dbReference type="Proteomes" id="UP000001947">
    <property type="component" value="Chromosome"/>
</dbReference>
<dbReference type="GO" id="GO:0005829">
    <property type="term" value="C:cytosol"/>
    <property type="evidence" value="ECO:0007669"/>
    <property type="project" value="TreeGrafter"/>
</dbReference>
<dbReference type="GO" id="GO:0003862">
    <property type="term" value="F:3-isopropylmalate dehydrogenase activity"/>
    <property type="evidence" value="ECO:0007669"/>
    <property type="project" value="UniProtKB-UniRule"/>
</dbReference>
<dbReference type="GO" id="GO:0000287">
    <property type="term" value="F:magnesium ion binding"/>
    <property type="evidence" value="ECO:0007669"/>
    <property type="project" value="InterPro"/>
</dbReference>
<dbReference type="GO" id="GO:0051287">
    <property type="term" value="F:NAD binding"/>
    <property type="evidence" value="ECO:0007669"/>
    <property type="project" value="InterPro"/>
</dbReference>
<dbReference type="GO" id="GO:0009098">
    <property type="term" value="P:L-leucine biosynthetic process"/>
    <property type="evidence" value="ECO:0007669"/>
    <property type="project" value="UniProtKB-UniRule"/>
</dbReference>
<dbReference type="FunFam" id="3.40.718.10:FF:000004">
    <property type="entry name" value="3-isopropylmalate dehydrogenase"/>
    <property type="match status" value="1"/>
</dbReference>
<dbReference type="Gene3D" id="3.40.718.10">
    <property type="entry name" value="Isopropylmalate Dehydrogenase"/>
    <property type="match status" value="1"/>
</dbReference>
<dbReference type="HAMAP" id="MF_01033">
    <property type="entry name" value="LeuB_type1"/>
    <property type="match status" value="1"/>
</dbReference>
<dbReference type="InterPro" id="IPR019818">
    <property type="entry name" value="IsoCit/isopropylmalate_DH_CS"/>
</dbReference>
<dbReference type="InterPro" id="IPR024084">
    <property type="entry name" value="IsoPropMal-DH-like_dom"/>
</dbReference>
<dbReference type="InterPro" id="IPR004429">
    <property type="entry name" value="Isopropylmalate_DH"/>
</dbReference>
<dbReference type="NCBIfam" id="TIGR00169">
    <property type="entry name" value="leuB"/>
    <property type="match status" value="1"/>
</dbReference>
<dbReference type="PANTHER" id="PTHR42979">
    <property type="entry name" value="3-ISOPROPYLMALATE DEHYDROGENASE"/>
    <property type="match status" value="1"/>
</dbReference>
<dbReference type="PANTHER" id="PTHR42979:SF1">
    <property type="entry name" value="3-ISOPROPYLMALATE DEHYDROGENASE"/>
    <property type="match status" value="1"/>
</dbReference>
<dbReference type="Pfam" id="PF00180">
    <property type="entry name" value="Iso_dh"/>
    <property type="match status" value="1"/>
</dbReference>
<dbReference type="SMART" id="SM01329">
    <property type="entry name" value="Iso_dh"/>
    <property type="match status" value="1"/>
</dbReference>
<dbReference type="SUPFAM" id="SSF53659">
    <property type="entry name" value="Isocitrate/Isopropylmalate dehydrogenase-like"/>
    <property type="match status" value="1"/>
</dbReference>
<dbReference type="PROSITE" id="PS00470">
    <property type="entry name" value="IDH_IMDH"/>
    <property type="match status" value="1"/>
</dbReference>
<keyword id="KW-0028">Amino-acid biosynthesis</keyword>
<keyword id="KW-0100">Branched-chain amino acid biosynthesis</keyword>
<keyword id="KW-0963">Cytoplasm</keyword>
<keyword id="KW-0432">Leucine biosynthesis</keyword>
<keyword id="KW-0460">Magnesium</keyword>
<keyword id="KW-0464">Manganese</keyword>
<keyword id="KW-0479">Metal-binding</keyword>
<keyword id="KW-0520">NAD</keyword>
<keyword id="KW-0560">Oxidoreductase</keyword>
<keyword id="KW-1185">Reference proteome</keyword>